<evidence type="ECO:0000250" key="1"/>
<evidence type="ECO:0000250" key="2">
    <source>
        <dbReference type="UniProtKB" id="P94522"/>
    </source>
</evidence>
<evidence type="ECO:0000255" key="3"/>
<evidence type="ECO:0000305" key="4"/>
<sequence>MYLYTLILLFLASANVNAYANPGACSGNCWTHDPGLYQRKSDGKYFRFATGGGIHIASADSLEGPWTDDGYVLPSGSIIDLDGKTNLWAPDLHYHDGTYYLYYAVSSLGSQNSATGVATSKTMEAGSWTDHGTTGIESTPSSPYNTIDANWIAVGGTQYVNFGSYWNNLFQVEMENGLKVKSGATPHQIAYNASGIHRQEAAFMFERNNYFYLTFSGGIALGYNDTWPAPGEEYFIAVCRSTSATGGFVDKNGVSCLNSGGSLLLSSHDFVYGPGGQGILQDSSKGFVLYYHYADTRIGKAVEDYQFGWNQLKWENDWPSV</sequence>
<feature type="signal peptide" evidence="3">
    <location>
        <begin position="1"/>
        <end position="18"/>
    </location>
</feature>
<feature type="chain" id="PRO_0000394635" description="Probable arabinan endo-1,5-alpha-L-arabinosidase C">
    <location>
        <begin position="19"/>
        <end position="321"/>
    </location>
</feature>
<feature type="active site" description="Proton acceptor" evidence="2">
    <location>
        <position position="33"/>
    </location>
</feature>
<feature type="active site" description="Proton donor" evidence="2">
    <location>
        <position position="200"/>
    </location>
</feature>
<feature type="site" description="Important for catalytic activity, responsible for pKa modulation of the active site Glu and correct orientation of both the proton donor and substrate" evidence="2">
    <location>
        <position position="148"/>
    </location>
</feature>
<feature type="glycosylation site" description="N-linked (GlcNAc...) asparagine" evidence="3">
    <location>
        <position position="192"/>
    </location>
</feature>
<feature type="glycosylation site" description="N-linked (GlcNAc...) asparagine" evidence="3">
    <location>
        <position position="224"/>
    </location>
</feature>
<keyword id="KW-0119">Carbohydrate metabolism</keyword>
<keyword id="KW-0325">Glycoprotein</keyword>
<keyword id="KW-0326">Glycosidase</keyword>
<keyword id="KW-0378">Hydrolase</keyword>
<keyword id="KW-0624">Polysaccharide degradation</keyword>
<keyword id="KW-1185">Reference proteome</keyword>
<keyword id="KW-0964">Secreted</keyword>
<keyword id="KW-0732">Signal</keyword>
<keyword id="KW-0858">Xylan degradation</keyword>
<dbReference type="EC" id="3.2.1.99"/>
<dbReference type="EMBL" id="AAHF01000018">
    <property type="protein sequence ID" value="EAL84189.1"/>
    <property type="status" value="ALT_INIT"/>
    <property type="molecule type" value="Genomic_DNA"/>
</dbReference>
<dbReference type="RefSeq" id="XP_731479.1">
    <property type="nucleotide sequence ID" value="XM_726386.1"/>
</dbReference>
<dbReference type="SMR" id="Q4W930"/>
<dbReference type="STRING" id="330879.Q4W930"/>
<dbReference type="CAZy" id="GH43">
    <property type="family name" value="Glycoside Hydrolase Family 43"/>
</dbReference>
<dbReference type="GlyCosmos" id="Q4W930">
    <property type="glycosylation" value="2 sites, No reported glycans"/>
</dbReference>
<dbReference type="GeneID" id="3503681"/>
<dbReference type="KEGG" id="afm:AFUA_6G00770"/>
<dbReference type="eggNOG" id="ENOG502QTQG">
    <property type="taxonomic scope" value="Eukaryota"/>
</dbReference>
<dbReference type="HOGENOM" id="CLU_009397_5_0_1"/>
<dbReference type="InParanoid" id="Q4W930"/>
<dbReference type="OrthoDB" id="195678at2759"/>
<dbReference type="UniPathway" id="UPA00667"/>
<dbReference type="Proteomes" id="UP000002530">
    <property type="component" value="Chromosome 6"/>
</dbReference>
<dbReference type="GO" id="GO:0005576">
    <property type="term" value="C:extracellular region"/>
    <property type="evidence" value="ECO:0007669"/>
    <property type="project" value="UniProtKB-SubCell"/>
</dbReference>
<dbReference type="GO" id="GO:0046558">
    <property type="term" value="F:arabinan endo-1,5-alpha-L-arabinosidase activity"/>
    <property type="evidence" value="ECO:0007669"/>
    <property type="project" value="UniProtKB-EC"/>
</dbReference>
<dbReference type="GO" id="GO:0031222">
    <property type="term" value="P:arabinan catabolic process"/>
    <property type="evidence" value="ECO:0007669"/>
    <property type="project" value="UniProtKB-UniPathway"/>
</dbReference>
<dbReference type="GO" id="GO:0045493">
    <property type="term" value="P:xylan catabolic process"/>
    <property type="evidence" value="ECO:0007669"/>
    <property type="project" value="UniProtKB-KW"/>
</dbReference>
<dbReference type="CDD" id="cd18831">
    <property type="entry name" value="GH43_AnAbnA-like"/>
    <property type="match status" value="1"/>
</dbReference>
<dbReference type="Gene3D" id="2.115.10.20">
    <property type="entry name" value="Glycosyl hydrolase domain, family 43"/>
    <property type="match status" value="1"/>
</dbReference>
<dbReference type="InterPro" id="IPR050727">
    <property type="entry name" value="GH43_arabinanases"/>
</dbReference>
<dbReference type="InterPro" id="IPR006710">
    <property type="entry name" value="Glyco_hydro_43"/>
</dbReference>
<dbReference type="InterPro" id="IPR016840">
    <property type="entry name" value="Glyco_hydro_43_endo_a_Ara-ase"/>
</dbReference>
<dbReference type="InterPro" id="IPR023296">
    <property type="entry name" value="Glyco_hydro_beta-prop_sf"/>
</dbReference>
<dbReference type="PANTHER" id="PTHR43301">
    <property type="entry name" value="ARABINAN ENDO-1,5-ALPHA-L-ARABINOSIDASE"/>
    <property type="match status" value="1"/>
</dbReference>
<dbReference type="PANTHER" id="PTHR43301:SF7">
    <property type="entry name" value="ARABINAN ENDO-1,5-ALPHA-L-ARABINOSIDASE C"/>
    <property type="match status" value="1"/>
</dbReference>
<dbReference type="Pfam" id="PF04616">
    <property type="entry name" value="Glyco_hydro_43"/>
    <property type="match status" value="1"/>
</dbReference>
<dbReference type="PIRSF" id="PIRSF026534">
    <property type="entry name" value="Endo_alpha-L-arabinosidase"/>
    <property type="match status" value="1"/>
</dbReference>
<dbReference type="SUPFAM" id="SSF75005">
    <property type="entry name" value="Arabinanase/levansucrase/invertase"/>
    <property type="match status" value="1"/>
</dbReference>
<organism>
    <name type="scientific">Aspergillus fumigatus (strain ATCC MYA-4609 / CBS 101355 / FGSC A1100 / Af293)</name>
    <name type="common">Neosartorya fumigata</name>
    <dbReference type="NCBI Taxonomy" id="330879"/>
    <lineage>
        <taxon>Eukaryota</taxon>
        <taxon>Fungi</taxon>
        <taxon>Dikarya</taxon>
        <taxon>Ascomycota</taxon>
        <taxon>Pezizomycotina</taxon>
        <taxon>Eurotiomycetes</taxon>
        <taxon>Eurotiomycetidae</taxon>
        <taxon>Eurotiales</taxon>
        <taxon>Aspergillaceae</taxon>
        <taxon>Aspergillus</taxon>
        <taxon>Aspergillus subgen. Fumigati</taxon>
    </lineage>
</organism>
<protein>
    <recommendedName>
        <fullName>Probable arabinan endo-1,5-alpha-L-arabinosidase C</fullName>
        <ecNumber>3.2.1.99</ecNumber>
    </recommendedName>
    <alternativeName>
        <fullName>Endo-1,5-alpha-L-arabinanase C</fullName>
        <shortName>ABN C</shortName>
    </alternativeName>
</protein>
<gene>
    <name type="primary">abnC</name>
    <name type="ORF">AFUA_6G00770</name>
</gene>
<comment type="function">
    <text evidence="1">Endo-1,5-alpha-L-arabinanase involved in degradation of pectin. Its preferred substrate is linear 1,5-alpha-L-arabinan (By similarity).</text>
</comment>
<comment type="catalytic activity">
    <reaction>
        <text>Endohydrolysis of (1-&gt;5)-alpha-arabinofuranosidic linkages in (1-&gt;5)-arabinans.</text>
        <dbReference type="EC" id="3.2.1.99"/>
    </reaction>
</comment>
<comment type="pathway">
    <text>Glycan metabolism; L-arabinan degradation.</text>
</comment>
<comment type="subcellular location">
    <subcellularLocation>
        <location evidence="1">Secreted</location>
    </subcellularLocation>
</comment>
<comment type="similarity">
    <text evidence="4">Belongs to the glycosyl hydrolase 43 family.</text>
</comment>
<comment type="sequence caution" evidence="4">
    <conflict type="erroneous initiation">
        <sequence resource="EMBL-CDS" id="EAL84189"/>
    </conflict>
    <text>Extended N-terminus.</text>
</comment>
<reference key="1">
    <citation type="journal article" date="2005" name="Nature">
        <title>Genomic sequence of the pathogenic and allergenic filamentous fungus Aspergillus fumigatus.</title>
        <authorList>
            <person name="Nierman W.C."/>
            <person name="Pain A."/>
            <person name="Anderson M.J."/>
            <person name="Wortman J.R."/>
            <person name="Kim H.S."/>
            <person name="Arroyo J."/>
            <person name="Berriman M."/>
            <person name="Abe K."/>
            <person name="Archer D.B."/>
            <person name="Bermejo C."/>
            <person name="Bennett J.W."/>
            <person name="Bowyer P."/>
            <person name="Chen D."/>
            <person name="Collins M."/>
            <person name="Coulsen R."/>
            <person name="Davies R."/>
            <person name="Dyer P.S."/>
            <person name="Farman M.L."/>
            <person name="Fedorova N."/>
            <person name="Fedorova N.D."/>
            <person name="Feldblyum T.V."/>
            <person name="Fischer R."/>
            <person name="Fosker N."/>
            <person name="Fraser A."/>
            <person name="Garcia J.L."/>
            <person name="Garcia M.J."/>
            <person name="Goble A."/>
            <person name="Goldman G.H."/>
            <person name="Gomi K."/>
            <person name="Griffith-Jones S."/>
            <person name="Gwilliam R."/>
            <person name="Haas B.J."/>
            <person name="Haas H."/>
            <person name="Harris D.E."/>
            <person name="Horiuchi H."/>
            <person name="Huang J."/>
            <person name="Humphray S."/>
            <person name="Jimenez J."/>
            <person name="Keller N."/>
            <person name="Khouri H."/>
            <person name="Kitamoto K."/>
            <person name="Kobayashi T."/>
            <person name="Konzack S."/>
            <person name="Kulkarni R."/>
            <person name="Kumagai T."/>
            <person name="Lafton A."/>
            <person name="Latge J.-P."/>
            <person name="Li W."/>
            <person name="Lord A."/>
            <person name="Lu C."/>
            <person name="Majoros W.H."/>
            <person name="May G.S."/>
            <person name="Miller B.L."/>
            <person name="Mohamoud Y."/>
            <person name="Molina M."/>
            <person name="Monod M."/>
            <person name="Mouyna I."/>
            <person name="Mulligan S."/>
            <person name="Murphy L.D."/>
            <person name="O'Neil S."/>
            <person name="Paulsen I."/>
            <person name="Penalva M.A."/>
            <person name="Pertea M."/>
            <person name="Price C."/>
            <person name="Pritchard B.L."/>
            <person name="Quail M.A."/>
            <person name="Rabbinowitsch E."/>
            <person name="Rawlins N."/>
            <person name="Rajandream M.A."/>
            <person name="Reichard U."/>
            <person name="Renauld H."/>
            <person name="Robson G.D."/>
            <person name="Rodriguez de Cordoba S."/>
            <person name="Rodriguez-Pena J.M."/>
            <person name="Ronning C.M."/>
            <person name="Rutter S."/>
            <person name="Salzberg S.L."/>
            <person name="Sanchez M."/>
            <person name="Sanchez-Ferrero J.C."/>
            <person name="Saunders D."/>
            <person name="Seeger K."/>
            <person name="Squares R."/>
            <person name="Squares S."/>
            <person name="Takeuchi M."/>
            <person name="Tekaia F."/>
            <person name="Turner G."/>
            <person name="Vazquez de Aldana C.R."/>
            <person name="Weidman J."/>
            <person name="White O."/>
            <person name="Woodward J.R."/>
            <person name="Yu J.-H."/>
            <person name="Fraser C.M."/>
            <person name="Galagan J.E."/>
            <person name="Asai K."/>
            <person name="Machida M."/>
            <person name="Hall N."/>
            <person name="Barrell B.G."/>
            <person name="Denning D.W."/>
        </authorList>
    </citation>
    <scope>NUCLEOTIDE SEQUENCE [LARGE SCALE GENOMIC DNA]</scope>
    <source>
        <strain>ATCC MYA-4609 / CBS 101355 / FGSC A1100 / Af293</strain>
    </source>
</reference>
<name>ABNC_ASPFU</name>
<proteinExistence type="inferred from homology"/>
<accession>Q4W930</accession>